<organism>
    <name type="scientific">Drosophila sechellia</name>
    <name type="common">Fruit fly</name>
    <dbReference type="NCBI Taxonomy" id="7238"/>
    <lineage>
        <taxon>Eukaryota</taxon>
        <taxon>Metazoa</taxon>
        <taxon>Ecdysozoa</taxon>
        <taxon>Arthropoda</taxon>
        <taxon>Hexapoda</taxon>
        <taxon>Insecta</taxon>
        <taxon>Pterygota</taxon>
        <taxon>Neoptera</taxon>
        <taxon>Endopterygota</taxon>
        <taxon>Diptera</taxon>
        <taxon>Brachycera</taxon>
        <taxon>Muscomorpha</taxon>
        <taxon>Ephydroidea</taxon>
        <taxon>Drosophilidae</taxon>
        <taxon>Drosophila</taxon>
        <taxon>Sophophora</taxon>
    </lineage>
</organism>
<feature type="chain" id="PRO_0000379048" description="Protein crossbronx-like">
    <location>
        <begin position="1"/>
        <end position="266"/>
    </location>
</feature>
<feature type="domain" description="UBC core" evidence="1">
    <location>
        <begin position="15"/>
        <end position="178"/>
    </location>
</feature>
<feature type="region of interest" description="Disordered" evidence="2">
    <location>
        <begin position="226"/>
        <end position="266"/>
    </location>
</feature>
<feature type="compositionally biased region" description="Basic and acidic residues" evidence="2">
    <location>
        <begin position="245"/>
        <end position="266"/>
    </location>
</feature>
<protein>
    <recommendedName>
        <fullName>Protein crossbronx-like</fullName>
    </recommendedName>
</protein>
<accession>B4HPU1</accession>
<reference key="1">
    <citation type="journal article" date="2007" name="Nature">
        <title>Evolution of genes and genomes on the Drosophila phylogeny.</title>
        <authorList>
            <consortium name="Drosophila 12 genomes consortium"/>
        </authorList>
    </citation>
    <scope>NUCLEOTIDE SEQUENCE [LARGE SCALE GENOMIC DNA]</scope>
    <source>
        <strain>Rob3c / Tucson 14021-0248.25</strain>
    </source>
</reference>
<evidence type="ECO:0000255" key="1">
    <source>
        <dbReference type="PROSITE-ProRule" id="PRU00388"/>
    </source>
</evidence>
<evidence type="ECO:0000256" key="2">
    <source>
        <dbReference type="SAM" id="MobiDB-lite"/>
    </source>
</evidence>
<evidence type="ECO:0000305" key="3"/>
<sequence length="266" mass="30727">MWYTTVRNPSIALIKQGYHILAEYNLVKEELKNIYAIPSYACGLHWFGVIFVHSGIYAGSVFRFSILLPDNFPADISLPTVVFSSAVLHPHICPQNKTLDLAHFLNEWRKDEHHIWHVLRYIQSIFADAEGSICTGQSSSGDLVVMDEVRNMDALNILVKSRPEYIERVQEQAILSRNLIYDRPPTEDPHYIIVEPYCAERHLKFMDQLKSPCWKEATSMDCSQPSEYLGHIDSSRQMDEEETNQLEKLHRGRIPEPQREEAEVSL</sequence>
<gene>
    <name type="ORF">GM19805</name>
</gene>
<dbReference type="EMBL" id="CH480816">
    <property type="protein sequence ID" value="EDW48659.1"/>
    <property type="molecule type" value="Genomic_DNA"/>
</dbReference>
<dbReference type="RefSeq" id="XP_002034646.1">
    <property type="nucleotide sequence ID" value="XM_002034610.1"/>
</dbReference>
<dbReference type="SMR" id="B4HPU1"/>
<dbReference type="STRING" id="7238.B4HPU1"/>
<dbReference type="EnsemblMetazoa" id="FBtr0202790">
    <property type="protein sequence ID" value="FBpp0201282"/>
    <property type="gene ID" value="FBgn0174691"/>
</dbReference>
<dbReference type="GeneID" id="6610028"/>
<dbReference type="KEGG" id="dse:6610028"/>
<dbReference type="HOGENOM" id="CLU_083049_2_0_1"/>
<dbReference type="OMA" id="DQHHIWH"/>
<dbReference type="PhylomeDB" id="B4HPU1"/>
<dbReference type="Proteomes" id="UP000001292">
    <property type="component" value="Unassembled WGS sequence"/>
</dbReference>
<dbReference type="CDD" id="cd23814">
    <property type="entry name" value="UEV_AKTIP"/>
    <property type="match status" value="1"/>
</dbReference>
<dbReference type="Gene3D" id="3.10.110.10">
    <property type="entry name" value="Ubiquitin Conjugating Enzyme"/>
    <property type="match status" value="1"/>
</dbReference>
<dbReference type="InterPro" id="IPR000608">
    <property type="entry name" value="UBQ-conjugat_E2_core"/>
</dbReference>
<dbReference type="InterPro" id="IPR016135">
    <property type="entry name" value="UBQ-conjugating_enzyme/RWD"/>
</dbReference>
<dbReference type="Pfam" id="PF00179">
    <property type="entry name" value="UQ_con"/>
    <property type="match status" value="1"/>
</dbReference>
<dbReference type="SMART" id="SM00212">
    <property type="entry name" value="UBCc"/>
    <property type="match status" value="1"/>
</dbReference>
<dbReference type="SUPFAM" id="SSF54495">
    <property type="entry name" value="UBC-like"/>
    <property type="match status" value="1"/>
</dbReference>
<dbReference type="PROSITE" id="PS50127">
    <property type="entry name" value="UBC_2"/>
    <property type="match status" value="1"/>
</dbReference>
<keyword id="KW-1185">Reference proteome</keyword>
<name>AKTP2_DROSE</name>
<comment type="similarity">
    <text evidence="1">Belongs to the ubiquitin-conjugating enzyme family. FTS subfamily.</text>
</comment>
<comment type="caution">
    <text evidence="3">Lacks the conserved Cys residue necessary for ubiquitin-conjugating enzyme E2 activity.</text>
</comment>
<proteinExistence type="inferred from homology"/>